<accession>Q17YG0</accession>
<gene>
    <name evidence="1" type="primary">hemH</name>
    <name type="ordered locus">Hac_0490</name>
</gene>
<organism>
    <name type="scientific">Helicobacter acinonychis (strain Sheeba)</name>
    <dbReference type="NCBI Taxonomy" id="382638"/>
    <lineage>
        <taxon>Bacteria</taxon>
        <taxon>Pseudomonadati</taxon>
        <taxon>Campylobacterota</taxon>
        <taxon>Epsilonproteobacteria</taxon>
        <taxon>Campylobacterales</taxon>
        <taxon>Helicobacteraceae</taxon>
        <taxon>Helicobacter</taxon>
    </lineage>
</organism>
<dbReference type="EC" id="4.98.1.1" evidence="1"/>
<dbReference type="EMBL" id="AM260522">
    <property type="protein sequence ID" value="CAJ99316.1"/>
    <property type="molecule type" value="Genomic_DNA"/>
</dbReference>
<dbReference type="RefSeq" id="WP_011577430.1">
    <property type="nucleotide sequence ID" value="NC_008229.1"/>
</dbReference>
<dbReference type="SMR" id="Q17YG0"/>
<dbReference type="STRING" id="382638.Hac_0490"/>
<dbReference type="GeneID" id="31757990"/>
<dbReference type="KEGG" id="hac:Hac_0490"/>
<dbReference type="eggNOG" id="COG0276">
    <property type="taxonomic scope" value="Bacteria"/>
</dbReference>
<dbReference type="HOGENOM" id="CLU_018884_4_1_7"/>
<dbReference type="OrthoDB" id="9809741at2"/>
<dbReference type="BioCyc" id="HACI382638:HAC_RS02230-MONOMER"/>
<dbReference type="UniPathway" id="UPA00252">
    <property type="reaction ID" value="UER00325"/>
</dbReference>
<dbReference type="Proteomes" id="UP000000775">
    <property type="component" value="Chromosome"/>
</dbReference>
<dbReference type="GO" id="GO:0005737">
    <property type="term" value="C:cytoplasm"/>
    <property type="evidence" value="ECO:0007669"/>
    <property type="project" value="UniProtKB-SubCell"/>
</dbReference>
<dbReference type="GO" id="GO:0004325">
    <property type="term" value="F:ferrochelatase activity"/>
    <property type="evidence" value="ECO:0007669"/>
    <property type="project" value="UniProtKB-UniRule"/>
</dbReference>
<dbReference type="GO" id="GO:0046872">
    <property type="term" value="F:metal ion binding"/>
    <property type="evidence" value="ECO:0007669"/>
    <property type="project" value="UniProtKB-KW"/>
</dbReference>
<dbReference type="GO" id="GO:0006783">
    <property type="term" value="P:heme biosynthetic process"/>
    <property type="evidence" value="ECO:0007669"/>
    <property type="project" value="UniProtKB-UniRule"/>
</dbReference>
<dbReference type="CDD" id="cd00419">
    <property type="entry name" value="Ferrochelatase_C"/>
    <property type="match status" value="1"/>
</dbReference>
<dbReference type="CDD" id="cd03411">
    <property type="entry name" value="Ferrochelatase_N"/>
    <property type="match status" value="1"/>
</dbReference>
<dbReference type="Gene3D" id="3.40.50.1400">
    <property type="match status" value="2"/>
</dbReference>
<dbReference type="HAMAP" id="MF_00323">
    <property type="entry name" value="Ferrochelatase"/>
    <property type="match status" value="1"/>
</dbReference>
<dbReference type="InterPro" id="IPR001015">
    <property type="entry name" value="Ferrochelatase"/>
</dbReference>
<dbReference type="InterPro" id="IPR019772">
    <property type="entry name" value="Ferrochelatase_AS"/>
</dbReference>
<dbReference type="InterPro" id="IPR033644">
    <property type="entry name" value="Ferrochelatase_C"/>
</dbReference>
<dbReference type="InterPro" id="IPR033659">
    <property type="entry name" value="Ferrochelatase_N"/>
</dbReference>
<dbReference type="NCBIfam" id="TIGR00109">
    <property type="entry name" value="hemH"/>
    <property type="match status" value="1"/>
</dbReference>
<dbReference type="PANTHER" id="PTHR11108">
    <property type="entry name" value="FERROCHELATASE"/>
    <property type="match status" value="1"/>
</dbReference>
<dbReference type="PANTHER" id="PTHR11108:SF1">
    <property type="entry name" value="FERROCHELATASE, MITOCHONDRIAL"/>
    <property type="match status" value="1"/>
</dbReference>
<dbReference type="Pfam" id="PF00762">
    <property type="entry name" value="Ferrochelatase"/>
    <property type="match status" value="1"/>
</dbReference>
<dbReference type="SUPFAM" id="SSF53800">
    <property type="entry name" value="Chelatase"/>
    <property type="match status" value="1"/>
</dbReference>
<dbReference type="PROSITE" id="PS00534">
    <property type="entry name" value="FERROCHELATASE"/>
    <property type="match status" value="1"/>
</dbReference>
<protein>
    <recommendedName>
        <fullName evidence="1">Ferrochelatase</fullName>
        <ecNumber evidence="1">4.98.1.1</ecNumber>
    </recommendedName>
    <alternativeName>
        <fullName evidence="1">Heme synthase</fullName>
    </alternativeName>
    <alternativeName>
        <fullName evidence="1">Protoheme ferro-lyase</fullName>
    </alternativeName>
</protein>
<reference key="1">
    <citation type="journal article" date="2006" name="PLoS Genet.">
        <title>Who ate whom? Adaptive Helicobacter genomic changes that accompanied a host jump from early humans to large felines.</title>
        <authorList>
            <person name="Eppinger M."/>
            <person name="Baar C."/>
            <person name="Linz B."/>
            <person name="Raddatz G."/>
            <person name="Lanz C."/>
            <person name="Keller H."/>
            <person name="Morelli G."/>
            <person name="Gressmann H."/>
            <person name="Achtman M."/>
            <person name="Schuster S.C."/>
        </authorList>
    </citation>
    <scope>NUCLEOTIDE SEQUENCE [LARGE SCALE GENOMIC DNA]</scope>
    <source>
        <strain>Sheeba</strain>
    </source>
</reference>
<feature type="chain" id="PRO_1000019309" description="Ferrochelatase">
    <location>
        <begin position="1"/>
        <end position="338"/>
    </location>
</feature>
<feature type="binding site" evidence="1">
    <location>
        <position position="210"/>
    </location>
    <ligand>
        <name>Fe cation</name>
        <dbReference type="ChEBI" id="CHEBI:24875"/>
    </ligand>
</feature>
<feature type="binding site" evidence="1">
    <location>
        <position position="291"/>
    </location>
    <ligand>
        <name>Fe cation</name>
        <dbReference type="ChEBI" id="CHEBI:24875"/>
    </ligand>
</feature>
<keyword id="KW-0963">Cytoplasm</keyword>
<keyword id="KW-0350">Heme biosynthesis</keyword>
<keyword id="KW-0408">Iron</keyword>
<keyword id="KW-0456">Lyase</keyword>
<keyword id="KW-0479">Metal-binding</keyword>
<keyword id="KW-0627">Porphyrin biosynthesis</keyword>
<name>HEMH_HELAH</name>
<evidence type="ECO:0000255" key="1">
    <source>
        <dbReference type="HAMAP-Rule" id="MF_00323"/>
    </source>
</evidence>
<comment type="function">
    <text evidence="1">Catalyzes the ferrous insertion into protoporphyrin IX.</text>
</comment>
<comment type="catalytic activity">
    <reaction evidence="1">
        <text>heme b + 2 H(+) = protoporphyrin IX + Fe(2+)</text>
        <dbReference type="Rhea" id="RHEA:22584"/>
        <dbReference type="ChEBI" id="CHEBI:15378"/>
        <dbReference type="ChEBI" id="CHEBI:29033"/>
        <dbReference type="ChEBI" id="CHEBI:57306"/>
        <dbReference type="ChEBI" id="CHEBI:60344"/>
        <dbReference type="EC" id="4.98.1.1"/>
    </reaction>
</comment>
<comment type="pathway">
    <text evidence="1">Porphyrin-containing compound metabolism; protoheme biosynthesis; protoheme from protoporphyrin-IX: step 1/1.</text>
</comment>
<comment type="subcellular location">
    <subcellularLocation>
        <location evidence="1">Cytoplasm</location>
    </subcellularLocation>
</comment>
<comment type="similarity">
    <text evidence="1">Belongs to the ferrochelatase family.</text>
</comment>
<sequence length="338" mass="38941">MNLAQENLNSPNNLGNNATKSPKETVILLNMGGPNSLYEVGVFLKNMFDDPFILTIKNNFMRKMVGKMIVNSRIEKSKKIYEKLGGKSPLTPITFALTERLNELDPSRFYTYAMRYTPPYASMVLQDLALKEVESLVFFSMYPQYSSTTTLSSFNDAFNALKSLETFRPKVRVIERFYASEKLNEIILNTILSTLNNHKSQDFVLIFSVHGLPKSIIDAGDTYQQECEHHVDLLKDLMRQKNIHFKQVLLSYQSKLGPMKWLEPSTEGLIEKHRKSNIIIYPLAFTIDNSETLYELEIQYRLMAARLAIKEYLVCPCLNDSIEFAKFIIELVKNLKDE</sequence>
<proteinExistence type="inferred from homology"/>